<organism>
    <name type="scientific">Homo sapiens</name>
    <name type="common">Human</name>
    <dbReference type="NCBI Taxonomy" id="9606"/>
    <lineage>
        <taxon>Eukaryota</taxon>
        <taxon>Metazoa</taxon>
        <taxon>Chordata</taxon>
        <taxon>Craniata</taxon>
        <taxon>Vertebrata</taxon>
        <taxon>Euteleostomi</taxon>
        <taxon>Mammalia</taxon>
        <taxon>Eutheria</taxon>
        <taxon>Euarchontoglires</taxon>
        <taxon>Primates</taxon>
        <taxon>Haplorrhini</taxon>
        <taxon>Catarrhini</taxon>
        <taxon>Hominidae</taxon>
        <taxon>Homo</taxon>
    </lineage>
</organism>
<accession>Q8NGK3</accession>
<accession>A8MUY8</accession>
<accession>B2RP35</accession>
<accession>Q6IFK4</accession>
<proteinExistence type="evidence at transcript level"/>
<reference key="1">
    <citation type="submission" date="2001-07" db="EMBL/GenBank/DDBJ databases">
        <title>Genome-wide discovery and analysis of human seven transmembrane helix receptor genes.</title>
        <authorList>
            <person name="Suwa M."/>
            <person name="Sato T."/>
            <person name="Okouchi I."/>
            <person name="Arita M."/>
            <person name="Futami K."/>
            <person name="Matsumoto S."/>
            <person name="Tsutsumi S."/>
            <person name="Aburatani H."/>
            <person name="Asai K."/>
            <person name="Akiyama Y."/>
        </authorList>
    </citation>
    <scope>NUCLEOTIDE SEQUENCE [GENOMIC DNA]</scope>
    <scope>VARIANT HIS-236</scope>
</reference>
<reference key="2">
    <citation type="journal article" date="2006" name="Nature">
        <title>Human chromosome 11 DNA sequence and analysis including novel gene identification.</title>
        <authorList>
            <person name="Taylor T.D."/>
            <person name="Noguchi H."/>
            <person name="Totoki Y."/>
            <person name="Toyoda A."/>
            <person name="Kuroki Y."/>
            <person name="Dewar K."/>
            <person name="Lloyd C."/>
            <person name="Itoh T."/>
            <person name="Takeda T."/>
            <person name="Kim D.-W."/>
            <person name="She X."/>
            <person name="Barlow K.F."/>
            <person name="Bloom T."/>
            <person name="Bruford E."/>
            <person name="Chang J.L."/>
            <person name="Cuomo C.A."/>
            <person name="Eichler E."/>
            <person name="FitzGerald M.G."/>
            <person name="Jaffe D.B."/>
            <person name="LaButti K."/>
            <person name="Nicol R."/>
            <person name="Park H.-S."/>
            <person name="Seaman C."/>
            <person name="Sougnez C."/>
            <person name="Yang X."/>
            <person name="Zimmer A.R."/>
            <person name="Zody M.C."/>
            <person name="Birren B.W."/>
            <person name="Nusbaum C."/>
            <person name="Fujiyama A."/>
            <person name="Hattori M."/>
            <person name="Rogers J."/>
            <person name="Lander E.S."/>
            <person name="Sakaki Y."/>
        </authorList>
    </citation>
    <scope>NUCLEOTIDE SEQUENCE [LARGE SCALE GENOMIC DNA]</scope>
</reference>
<reference key="3">
    <citation type="submission" date="2005-09" db="EMBL/GenBank/DDBJ databases">
        <authorList>
            <person name="Mural R.J."/>
            <person name="Istrail S."/>
            <person name="Sutton G.G."/>
            <person name="Florea L."/>
            <person name="Halpern A.L."/>
            <person name="Mobarry C.M."/>
            <person name="Lippert R."/>
            <person name="Walenz B."/>
            <person name="Shatkay H."/>
            <person name="Dew I."/>
            <person name="Miller J.R."/>
            <person name="Flanigan M.J."/>
            <person name="Edwards N.J."/>
            <person name="Bolanos R."/>
            <person name="Fasulo D."/>
            <person name="Halldorsson B.V."/>
            <person name="Hannenhalli S."/>
            <person name="Turner R."/>
            <person name="Yooseph S."/>
            <person name="Lu F."/>
            <person name="Nusskern D.R."/>
            <person name="Shue B.C."/>
            <person name="Zheng X.H."/>
            <person name="Zhong F."/>
            <person name="Delcher A.L."/>
            <person name="Huson D.H."/>
            <person name="Kravitz S.A."/>
            <person name="Mouchard L."/>
            <person name="Reinert K."/>
            <person name="Remington K.A."/>
            <person name="Clark A.G."/>
            <person name="Waterman M.S."/>
            <person name="Eichler E.E."/>
            <person name="Adams M.D."/>
            <person name="Hunkapiller M.W."/>
            <person name="Myers E.W."/>
            <person name="Venter J.C."/>
        </authorList>
    </citation>
    <scope>NUCLEOTIDE SEQUENCE [LARGE SCALE GENOMIC DNA]</scope>
</reference>
<reference key="4">
    <citation type="journal article" date="2004" name="Genome Res.">
        <title>The status, quality, and expansion of the NIH full-length cDNA project: the Mammalian Gene Collection (MGC).</title>
        <authorList>
            <consortium name="The MGC Project Team"/>
        </authorList>
    </citation>
    <scope>NUCLEOTIDE SEQUENCE [LARGE SCALE MRNA]</scope>
</reference>
<reference key="5">
    <citation type="journal article" date="2004" name="Proc. Natl. Acad. Sci. U.S.A.">
        <title>The human olfactory receptor gene family.</title>
        <authorList>
            <person name="Malnic B."/>
            <person name="Godfrey P.A."/>
            <person name="Buck L.B."/>
        </authorList>
    </citation>
    <scope>IDENTIFICATION</scope>
</reference>
<reference key="6">
    <citation type="journal article" date="2004" name="Proc. Natl. Acad. Sci. U.S.A.">
        <authorList>
            <person name="Malnic B."/>
            <person name="Godfrey P.A."/>
            <person name="Buck L.B."/>
        </authorList>
    </citation>
    <scope>ERRATUM OF PUBMED:14983052</scope>
</reference>
<sequence>MSASNITLTHPTAFLLVGIPGLEHLHIWISIPFCLAYTLALLGNCTLLLIIQADAALHEPMYLFLAMLAAIDLVLSSSALPKMLAIFWFRDREINFFACLAQMFFLHSFSIMESAVLLAMAFDRYVAICKPLHYTKVLTGSLITKIGMAAVARAVTLMTPLPFLLRCFHYCRGPVIAHCYCEHMAVVRLACGDTSFNNIYGIAVAMFIVVLDLLLVILSYIFILQAVLLLASQEARYKAFGTCVSHIGAILAFYTTVVISSVMHRVARHAAPHVHILLANFYLLFPPMVNPIIYGVKTKQIRESILGVFPRKDM</sequence>
<dbReference type="EMBL" id="AB065791">
    <property type="protein sequence ID" value="BAC06010.1"/>
    <property type="molecule type" value="Genomic_DNA"/>
</dbReference>
<dbReference type="EMBL" id="AC010930">
    <property type="status" value="NOT_ANNOTATED_CDS"/>
    <property type="molecule type" value="Genomic_DNA"/>
</dbReference>
<dbReference type="EMBL" id="CH471064">
    <property type="protein sequence ID" value="EAW68843.1"/>
    <property type="molecule type" value="Genomic_DNA"/>
</dbReference>
<dbReference type="EMBL" id="BC137247">
    <property type="protein sequence ID" value="AAI37248.1"/>
    <property type="molecule type" value="mRNA"/>
</dbReference>
<dbReference type="EMBL" id="BC137248">
    <property type="protein sequence ID" value="AAI37249.1"/>
    <property type="molecule type" value="mRNA"/>
</dbReference>
<dbReference type="EMBL" id="BK004258">
    <property type="protein sequence ID" value="DAA04656.1"/>
    <property type="molecule type" value="Genomic_DNA"/>
</dbReference>
<dbReference type="CCDS" id="CCDS31351.1"/>
<dbReference type="RefSeq" id="NP_001005172.2">
    <property type="nucleotide sequence ID" value="NM_001005172.2"/>
</dbReference>
<dbReference type="SMR" id="Q8NGK3"/>
<dbReference type="BioGRID" id="125662">
    <property type="interactions" value="6"/>
</dbReference>
<dbReference type="FunCoup" id="Q8NGK3">
    <property type="interactions" value="465"/>
</dbReference>
<dbReference type="IntAct" id="Q8NGK3">
    <property type="interactions" value="3"/>
</dbReference>
<dbReference type="STRING" id="9606.ENSP00000318956"/>
<dbReference type="GlyCosmos" id="Q8NGK3">
    <property type="glycosylation" value="1 site, No reported glycans"/>
</dbReference>
<dbReference type="GlyGen" id="Q8NGK3">
    <property type="glycosylation" value="1 site"/>
</dbReference>
<dbReference type="BioMuta" id="OR52K2"/>
<dbReference type="DMDM" id="218511725"/>
<dbReference type="MassIVE" id="Q8NGK3"/>
<dbReference type="PaxDb" id="9606-ENSP00000318956"/>
<dbReference type="PeptideAtlas" id="Q8NGK3"/>
<dbReference type="Antibodypedia" id="57453">
    <property type="antibodies" value="11 antibodies from 9 providers"/>
</dbReference>
<dbReference type="DNASU" id="119774"/>
<dbReference type="Ensembl" id="ENST00000325719.4">
    <property type="protein sequence ID" value="ENSP00000318956.4"/>
    <property type="gene ID" value="ENSG00000181963.5"/>
</dbReference>
<dbReference type="GeneID" id="119774"/>
<dbReference type="KEGG" id="hsa:119774"/>
<dbReference type="MANE-Select" id="ENST00000325719.4">
    <property type="protein sequence ID" value="ENSP00000318956.4"/>
    <property type="RefSeq nucleotide sequence ID" value="NM_001005172.2"/>
    <property type="RefSeq protein sequence ID" value="NP_001005172.2"/>
</dbReference>
<dbReference type="UCSC" id="uc001lyz.2">
    <property type="organism name" value="human"/>
</dbReference>
<dbReference type="AGR" id="HGNC:15223"/>
<dbReference type="CTD" id="119774"/>
<dbReference type="GeneCards" id="OR52K2"/>
<dbReference type="HGNC" id="HGNC:15223">
    <property type="gene designation" value="OR52K2"/>
</dbReference>
<dbReference type="HPA" id="ENSG00000181963">
    <property type="expression patterns" value="Not detected"/>
</dbReference>
<dbReference type="neXtProt" id="NX_Q8NGK3"/>
<dbReference type="OpenTargets" id="ENSG00000181963"/>
<dbReference type="PharmGKB" id="PA32418"/>
<dbReference type="VEuPathDB" id="HostDB:ENSG00000181963"/>
<dbReference type="eggNOG" id="ENOG502SHN8">
    <property type="taxonomic scope" value="Eukaryota"/>
</dbReference>
<dbReference type="GeneTree" id="ENSGT01130000278320"/>
<dbReference type="HOGENOM" id="CLU_012526_0_0_1"/>
<dbReference type="InParanoid" id="Q8NGK3"/>
<dbReference type="OMA" id="LEHLHNW"/>
<dbReference type="OrthoDB" id="5969463at2759"/>
<dbReference type="PAN-GO" id="Q8NGK3">
    <property type="GO annotations" value="0 GO annotations based on evolutionary models"/>
</dbReference>
<dbReference type="PhylomeDB" id="Q8NGK3"/>
<dbReference type="TreeFam" id="TF343679"/>
<dbReference type="PathwayCommons" id="Q8NGK3"/>
<dbReference type="Reactome" id="R-HSA-9752946">
    <property type="pathway name" value="Expression and translocation of olfactory receptors"/>
</dbReference>
<dbReference type="BioGRID-ORCS" id="119774">
    <property type="hits" value="7 hits in 705 CRISPR screens"/>
</dbReference>
<dbReference type="ChiTaRS" id="OR52K2">
    <property type="organism name" value="human"/>
</dbReference>
<dbReference type="GeneWiki" id="OR52K2"/>
<dbReference type="GenomeRNAi" id="119774"/>
<dbReference type="Pharos" id="Q8NGK3">
    <property type="development level" value="Tdark"/>
</dbReference>
<dbReference type="PRO" id="PR:Q8NGK3"/>
<dbReference type="Proteomes" id="UP000005640">
    <property type="component" value="Chromosome 11"/>
</dbReference>
<dbReference type="RNAct" id="Q8NGK3">
    <property type="molecule type" value="protein"/>
</dbReference>
<dbReference type="Bgee" id="ENSG00000181963">
    <property type="expression patterns" value="Expressed in monocyte and 5 other cell types or tissues"/>
</dbReference>
<dbReference type="ExpressionAtlas" id="Q8NGK3">
    <property type="expression patterns" value="baseline and differential"/>
</dbReference>
<dbReference type="GO" id="GO:0005886">
    <property type="term" value="C:plasma membrane"/>
    <property type="evidence" value="ECO:0000318"/>
    <property type="project" value="GO_Central"/>
</dbReference>
<dbReference type="GO" id="GO:0004930">
    <property type="term" value="F:G protein-coupled receptor activity"/>
    <property type="evidence" value="ECO:0007669"/>
    <property type="project" value="UniProtKB-KW"/>
</dbReference>
<dbReference type="GO" id="GO:0004984">
    <property type="term" value="F:olfactory receptor activity"/>
    <property type="evidence" value="ECO:0000318"/>
    <property type="project" value="GO_Central"/>
</dbReference>
<dbReference type="FunFam" id="1.20.1070.10:FF:000006">
    <property type="entry name" value="Olfactory receptor"/>
    <property type="match status" value="1"/>
</dbReference>
<dbReference type="Gene3D" id="1.20.1070.10">
    <property type="entry name" value="Rhodopsin 7-helix transmembrane proteins"/>
    <property type="match status" value="1"/>
</dbReference>
<dbReference type="InterPro" id="IPR000276">
    <property type="entry name" value="GPCR_Rhodpsn"/>
</dbReference>
<dbReference type="InterPro" id="IPR017452">
    <property type="entry name" value="GPCR_Rhodpsn_7TM"/>
</dbReference>
<dbReference type="InterPro" id="IPR000725">
    <property type="entry name" value="Olfact_rcpt"/>
</dbReference>
<dbReference type="InterPro" id="IPR050402">
    <property type="entry name" value="OR51/52/56-like"/>
</dbReference>
<dbReference type="PANTHER" id="PTHR26450:SF404">
    <property type="entry name" value="OLFACTORY RECEPTOR 52K2"/>
    <property type="match status" value="1"/>
</dbReference>
<dbReference type="PANTHER" id="PTHR26450">
    <property type="entry name" value="OLFACTORY RECEPTOR 56B1-RELATED"/>
    <property type="match status" value="1"/>
</dbReference>
<dbReference type="Pfam" id="PF13853">
    <property type="entry name" value="7tm_4"/>
    <property type="match status" value="1"/>
</dbReference>
<dbReference type="PRINTS" id="PR00237">
    <property type="entry name" value="GPCRRHODOPSN"/>
</dbReference>
<dbReference type="PRINTS" id="PR00245">
    <property type="entry name" value="OLFACTORYR"/>
</dbReference>
<dbReference type="SUPFAM" id="SSF81321">
    <property type="entry name" value="Family A G protein-coupled receptor-like"/>
    <property type="match status" value="1"/>
</dbReference>
<dbReference type="PROSITE" id="PS00237">
    <property type="entry name" value="G_PROTEIN_RECEP_F1_1"/>
    <property type="match status" value="1"/>
</dbReference>
<dbReference type="PROSITE" id="PS50262">
    <property type="entry name" value="G_PROTEIN_RECEP_F1_2"/>
    <property type="match status" value="1"/>
</dbReference>
<feature type="chain" id="PRO_0000150782" description="Olfactory receptor 52K2">
    <location>
        <begin position="1"/>
        <end position="314"/>
    </location>
</feature>
<feature type="topological domain" description="Extracellular" evidence="1">
    <location>
        <begin position="1"/>
        <end position="27"/>
    </location>
</feature>
<feature type="transmembrane region" description="Helical; Name=1" evidence="1">
    <location>
        <begin position="28"/>
        <end position="48"/>
    </location>
</feature>
<feature type="topological domain" description="Cytoplasmic" evidence="1">
    <location>
        <begin position="49"/>
        <end position="56"/>
    </location>
</feature>
<feature type="transmembrane region" description="Helical; Name=2" evidence="1">
    <location>
        <begin position="57"/>
        <end position="77"/>
    </location>
</feature>
<feature type="topological domain" description="Extracellular" evidence="1">
    <location>
        <begin position="78"/>
        <end position="101"/>
    </location>
</feature>
<feature type="transmembrane region" description="Helical; Name=3" evidence="1">
    <location>
        <begin position="102"/>
        <end position="122"/>
    </location>
</feature>
<feature type="topological domain" description="Cytoplasmic" evidence="1">
    <location>
        <begin position="123"/>
        <end position="141"/>
    </location>
</feature>
<feature type="transmembrane region" description="Helical; Name=4" evidence="1">
    <location>
        <begin position="142"/>
        <end position="162"/>
    </location>
</feature>
<feature type="topological domain" description="Extracellular" evidence="1">
    <location>
        <begin position="163"/>
        <end position="198"/>
    </location>
</feature>
<feature type="transmembrane region" description="Helical; Name=5" evidence="1">
    <location>
        <begin position="199"/>
        <end position="219"/>
    </location>
</feature>
<feature type="topological domain" description="Cytoplasmic" evidence="1">
    <location>
        <begin position="220"/>
        <end position="239"/>
    </location>
</feature>
<feature type="transmembrane region" description="Helical; Name=6" evidence="1">
    <location>
        <begin position="240"/>
        <end position="260"/>
    </location>
</feature>
<feature type="topological domain" description="Extracellular" evidence="1">
    <location>
        <begin position="261"/>
        <end position="275"/>
    </location>
</feature>
<feature type="transmembrane region" description="Helical; Name=7" evidence="1">
    <location>
        <begin position="276"/>
        <end position="296"/>
    </location>
</feature>
<feature type="topological domain" description="Cytoplasmic" evidence="1">
    <location>
        <begin position="297"/>
        <end position="314"/>
    </location>
</feature>
<feature type="glycosylation site" description="N-linked (GlcNAc...) asparagine" evidence="1">
    <location>
        <position position="5"/>
    </location>
</feature>
<feature type="disulfide bond" evidence="2">
    <location>
        <begin position="99"/>
        <end position="191"/>
    </location>
</feature>
<feature type="sequence variant" id="VAR_034347" description="In dbSNP:rs11032296.">
    <original>R</original>
    <variation>C</variation>
    <location>
        <position position="124"/>
    </location>
</feature>
<feature type="sequence variant" id="VAR_047827" description="In dbSNP:rs331537." evidence="3">
    <original>R</original>
    <variation>H</variation>
    <location>
        <position position="236"/>
    </location>
</feature>
<feature type="sequence variant" id="VAR_034348" description="In dbSNP:rs7934336.">
    <original>R</original>
    <variation>C</variation>
    <location>
        <position position="302"/>
    </location>
</feature>
<gene>
    <name type="primary">OR52K2</name>
</gene>
<keyword id="KW-1003">Cell membrane</keyword>
<keyword id="KW-1015">Disulfide bond</keyword>
<keyword id="KW-0297">G-protein coupled receptor</keyword>
<keyword id="KW-0325">Glycoprotein</keyword>
<keyword id="KW-0472">Membrane</keyword>
<keyword id="KW-0552">Olfaction</keyword>
<keyword id="KW-0675">Receptor</keyword>
<keyword id="KW-1185">Reference proteome</keyword>
<keyword id="KW-0716">Sensory transduction</keyword>
<keyword id="KW-0807">Transducer</keyword>
<keyword id="KW-0812">Transmembrane</keyword>
<keyword id="KW-1133">Transmembrane helix</keyword>
<name>O52K2_HUMAN</name>
<protein>
    <recommendedName>
        <fullName>Olfactory receptor 52K2</fullName>
    </recommendedName>
    <alternativeName>
        <fullName>Olfactory receptor OR11-7</fullName>
    </alternativeName>
</protein>
<evidence type="ECO:0000255" key="1"/>
<evidence type="ECO:0000255" key="2">
    <source>
        <dbReference type="PROSITE-ProRule" id="PRU00521"/>
    </source>
</evidence>
<evidence type="ECO:0000269" key="3">
    <source ref="1"/>
</evidence>
<evidence type="ECO:0000305" key="4"/>
<comment type="function">
    <text evidence="4">Odorant receptor.</text>
</comment>
<comment type="subcellular location">
    <subcellularLocation>
        <location>Cell membrane</location>
        <topology>Multi-pass membrane protein</topology>
    </subcellularLocation>
</comment>
<comment type="similarity">
    <text evidence="2">Belongs to the G-protein coupled receptor 1 family.</text>
</comment>
<comment type="online information" name="Human Olfactory Receptor Data Exploratorium (HORDE)">
    <link uri="http://genome.weizmann.ac.il/horde/card/index/symbol:OR52K2"/>
</comment>